<keyword id="KW-0119">Carbohydrate metabolism</keyword>
<keyword id="KW-0378">Hydrolase</keyword>
<keyword id="KW-0460">Magnesium</keyword>
<keyword id="KW-0479">Metal-binding</keyword>
<comment type="function">
    <text evidence="1">Probably catalyzes the deacetylation of acetylated carbohydrates an important step in the degradation of oligosaccharides.</text>
</comment>
<comment type="cofactor">
    <cofactor evidence="1">
        <name>Mg(2+)</name>
        <dbReference type="ChEBI" id="CHEBI:18420"/>
    </cofactor>
</comment>
<comment type="subunit">
    <text evidence="1">Homodimer.</text>
</comment>
<comment type="similarity">
    <text evidence="1">Belongs to the YdjC deacetylase family.</text>
</comment>
<organism>
    <name type="scientific">Vibrio cholerae serotype O1 (strain ATCC 39541 / Classical Ogawa 395 / O395)</name>
    <dbReference type="NCBI Taxonomy" id="345073"/>
    <lineage>
        <taxon>Bacteria</taxon>
        <taxon>Pseudomonadati</taxon>
        <taxon>Pseudomonadota</taxon>
        <taxon>Gammaproteobacteria</taxon>
        <taxon>Vibrionales</taxon>
        <taxon>Vibrionaceae</taxon>
        <taxon>Vibrio</taxon>
    </lineage>
</organism>
<evidence type="ECO:0000255" key="1">
    <source>
        <dbReference type="HAMAP-Rule" id="MF_01246"/>
    </source>
</evidence>
<protein>
    <recommendedName>
        <fullName evidence="1">Carbohydrate deacetylase</fullName>
        <ecNumber evidence="1">3.5.1.-</ecNumber>
    </recommendedName>
</protein>
<name>YDJC_VIBC3</name>
<sequence>MKVIFNADDFGLTQGVNQGIVKAHLDGVVKSTTLMVGMPAEQHAVQLAKQLPELKIGLHLRFTAGRPLTGERNLTDEHGVFTAYRDFWQRRDYQPEAIYHEAIAQVEHFLKLGLTLSHLDSHHHAHTHPQLAPIIYEVAKKYHVPLRDIGMAGEEAFGCRYHFTDFFYDQRLGIDPLMKHLLELKERFDLVEVMCHPAFVDPLLEKCSGYAKQREEELRILTSAQLIQLLVAHDIEITDYSALISAPLHSCV</sequence>
<feature type="chain" id="PRO_1000073175" description="Carbohydrate deacetylase">
    <location>
        <begin position="1"/>
        <end position="252"/>
    </location>
</feature>
<feature type="binding site" evidence="1">
    <location>
        <position position="59"/>
    </location>
    <ligand>
        <name>Mg(2+)</name>
        <dbReference type="ChEBI" id="CHEBI:18420"/>
    </ligand>
</feature>
<feature type="binding site" evidence="1">
    <location>
        <position position="122"/>
    </location>
    <ligand>
        <name>Mg(2+)</name>
        <dbReference type="ChEBI" id="CHEBI:18420"/>
    </ligand>
</feature>
<gene>
    <name type="ordered locus">VC0395_A0904</name>
    <name type="ordered locus">VC395_1404</name>
</gene>
<dbReference type="EC" id="3.5.1.-" evidence="1"/>
<dbReference type="EMBL" id="CP000627">
    <property type="protein sequence ID" value="ABQ20068.1"/>
    <property type="molecule type" value="Genomic_DNA"/>
</dbReference>
<dbReference type="EMBL" id="CP001235">
    <property type="protein sequence ID" value="ACP09412.1"/>
    <property type="molecule type" value="Genomic_DNA"/>
</dbReference>
<dbReference type="SMR" id="A5F1P8"/>
<dbReference type="KEGG" id="vco:VC0395_A0904"/>
<dbReference type="KEGG" id="vcr:VC395_1404"/>
<dbReference type="PATRIC" id="fig|345073.21.peg.1363"/>
<dbReference type="eggNOG" id="COG3394">
    <property type="taxonomic scope" value="Bacteria"/>
</dbReference>
<dbReference type="HOGENOM" id="CLU_064244_4_0_6"/>
<dbReference type="OrthoDB" id="9774177at2"/>
<dbReference type="Proteomes" id="UP000000249">
    <property type="component" value="Chromosome 2"/>
</dbReference>
<dbReference type="GO" id="GO:0019213">
    <property type="term" value="F:deacetylase activity"/>
    <property type="evidence" value="ECO:0007669"/>
    <property type="project" value="TreeGrafter"/>
</dbReference>
<dbReference type="GO" id="GO:0016811">
    <property type="term" value="F:hydrolase activity, acting on carbon-nitrogen (but not peptide) bonds, in linear amides"/>
    <property type="evidence" value="ECO:0007669"/>
    <property type="project" value="UniProtKB-UniRule"/>
</dbReference>
<dbReference type="GO" id="GO:0046872">
    <property type="term" value="F:metal ion binding"/>
    <property type="evidence" value="ECO:0007669"/>
    <property type="project" value="UniProtKB-KW"/>
</dbReference>
<dbReference type="GO" id="GO:0000272">
    <property type="term" value="P:polysaccharide catabolic process"/>
    <property type="evidence" value="ECO:0007669"/>
    <property type="project" value="InterPro"/>
</dbReference>
<dbReference type="CDD" id="cd10803">
    <property type="entry name" value="YdjC_EF3048_like"/>
    <property type="match status" value="1"/>
</dbReference>
<dbReference type="Gene3D" id="3.20.20.370">
    <property type="entry name" value="Glycoside hydrolase/deacetylase"/>
    <property type="match status" value="1"/>
</dbReference>
<dbReference type="HAMAP" id="MF_01246">
    <property type="entry name" value="COD"/>
    <property type="match status" value="1"/>
</dbReference>
<dbReference type="InterPro" id="IPR022948">
    <property type="entry name" value="COD_ChbG_bac"/>
</dbReference>
<dbReference type="InterPro" id="IPR011330">
    <property type="entry name" value="Glyco_hydro/deAcase_b/a-brl"/>
</dbReference>
<dbReference type="InterPro" id="IPR006879">
    <property type="entry name" value="YdjC-like"/>
</dbReference>
<dbReference type="NCBIfam" id="NF002559">
    <property type="entry name" value="PRK02134.1"/>
    <property type="match status" value="1"/>
</dbReference>
<dbReference type="PANTHER" id="PTHR31609:SF1">
    <property type="entry name" value="CARBOHYDRATE DEACETYLASE"/>
    <property type="match status" value="1"/>
</dbReference>
<dbReference type="PANTHER" id="PTHR31609">
    <property type="entry name" value="YDJC DEACETYLASE FAMILY MEMBER"/>
    <property type="match status" value="1"/>
</dbReference>
<dbReference type="Pfam" id="PF04794">
    <property type="entry name" value="YdjC"/>
    <property type="match status" value="1"/>
</dbReference>
<dbReference type="SUPFAM" id="SSF88713">
    <property type="entry name" value="Glycoside hydrolase/deacetylase"/>
    <property type="match status" value="1"/>
</dbReference>
<proteinExistence type="inferred from homology"/>
<reference key="1">
    <citation type="submission" date="2007-03" db="EMBL/GenBank/DDBJ databases">
        <authorList>
            <person name="Heidelberg J."/>
        </authorList>
    </citation>
    <scope>NUCLEOTIDE SEQUENCE [LARGE SCALE GENOMIC DNA]</scope>
    <source>
        <strain>ATCC 39541 / Classical Ogawa 395 / O395</strain>
    </source>
</reference>
<reference key="2">
    <citation type="journal article" date="2008" name="PLoS ONE">
        <title>A recalibrated molecular clock and independent origins for the cholera pandemic clones.</title>
        <authorList>
            <person name="Feng L."/>
            <person name="Reeves P.R."/>
            <person name="Lan R."/>
            <person name="Ren Y."/>
            <person name="Gao C."/>
            <person name="Zhou Z."/>
            <person name="Ren Y."/>
            <person name="Cheng J."/>
            <person name="Wang W."/>
            <person name="Wang J."/>
            <person name="Qian W."/>
            <person name="Li D."/>
            <person name="Wang L."/>
        </authorList>
    </citation>
    <scope>NUCLEOTIDE SEQUENCE [LARGE SCALE GENOMIC DNA]</scope>
    <source>
        <strain>ATCC 39541 / Classical Ogawa 395 / O395</strain>
    </source>
</reference>
<accession>A5F1P8</accession>
<accession>C3M046</accession>